<feature type="chain" id="PRO_0000075405" description="Insertion element iso-IS1n protein InsB">
    <location>
        <begin position="1"/>
        <end position="131"/>
    </location>
</feature>
<gene>
    <name type="primary">insB</name>
</gene>
<dbReference type="EMBL" id="J01737">
    <property type="protein sequence ID" value="AAA25032.1"/>
    <property type="molecule type" value="Genomic_DNA"/>
</dbReference>
<dbReference type="PIR" id="A04456">
    <property type="entry name" value="IEEBC1"/>
</dbReference>
<dbReference type="SMR" id="P03832"/>
<dbReference type="OMA" id="LMPFNIG"/>
<dbReference type="GO" id="GO:0003677">
    <property type="term" value="F:DNA binding"/>
    <property type="evidence" value="ECO:0007669"/>
    <property type="project" value="InterPro"/>
</dbReference>
<dbReference type="GO" id="GO:0004803">
    <property type="term" value="F:transposase activity"/>
    <property type="evidence" value="ECO:0007669"/>
    <property type="project" value="InterPro"/>
</dbReference>
<dbReference type="GO" id="GO:0006313">
    <property type="term" value="P:DNA transposition"/>
    <property type="evidence" value="ECO:0007669"/>
    <property type="project" value="InterPro"/>
</dbReference>
<dbReference type="InterPro" id="IPR005063">
    <property type="entry name" value="Transposase_27"/>
</dbReference>
<dbReference type="InterPro" id="IPR051354">
    <property type="entry name" value="Transposase_27_IS1"/>
</dbReference>
<dbReference type="NCBIfam" id="NF033558">
    <property type="entry name" value="transpos_IS1"/>
    <property type="match status" value="1"/>
</dbReference>
<dbReference type="PANTHER" id="PTHR33293">
    <property type="entry name" value="INSERTION ELEMENT IS1 1 PROTEIN INSB-RELATED"/>
    <property type="match status" value="1"/>
</dbReference>
<dbReference type="PANTHER" id="PTHR33293:SF1">
    <property type="entry name" value="INSERTION ELEMENT IS1 1 PROTEIN INSB-RELATED"/>
    <property type="match status" value="1"/>
</dbReference>
<dbReference type="Pfam" id="PF03400">
    <property type="entry name" value="DDE_Tnp_IS1"/>
    <property type="match status" value="1"/>
</dbReference>
<keyword id="KW-0233">DNA recombination</keyword>
<keyword id="KW-0814">Transposable element</keyword>
<keyword id="KW-0815">Transposition</keyword>
<comment type="function">
    <text>Absolutely required for transposition of IS1.</text>
</comment>
<comment type="similarity">
    <text evidence="1">Belongs to the transposase 27 family.</text>
</comment>
<sequence length="131" mass="15364">MALICELDEQWSFVGSKARQHWLWYAYNTKTGGVLAYTFGPRTDETCRELLALLTPFNIGMLTSDDWGSYGREVPKDKHLTGKIFTQRIERNNLTLRTRIKRLARKTICFSRSVEIHEKVIGTFIEKHMFY</sequence>
<organism>
    <name type="scientific">Shigella dysenteriae</name>
    <dbReference type="NCBI Taxonomy" id="622"/>
    <lineage>
        <taxon>Bacteria</taxon>
        <taxon>Pseudomonadati</taxon>
        <taxon>Pseudomonadota</taxon>
        <taxon>Gammaproteobacteria</taxon>
        <taxon>Enterobacterales</taxon>
        <taxon>Enterobacteriaceae</taxon>
        <taxon>Shigella</taxon>
    </lineage>
</organism>
<protein>
    <recommendedName>
        <fullName>Insertion element iso-IS1n protein InsB</fullName>
    </recommendedName>
</protein>
<name>INBN_SHIDY</name>
<proteinExistence type="inferred from homology"/>
<accession>P03832</accession>
<evidence type="ECO:0000305" key="1"/>
<reference key="1">
    <citation type="journal article" date="1981" name="Nature">
        <title>Multiple copies of iso-insertion sequences of IS1 in Shigella dysenteriae chromosome.</title>
        <authorList>
            <person name="Ohtsubo H."/>
            <person name="Nyman K."/>
            <person name="Doroszkiewicz W."/>
            <person name="Ohtsubo E."/>
        </authorList>
    </citation>
    <scope>NUCLEOTIDE SEQUENCE [GENOMIC DNA]</scope>
</reference>